<keyword id="KW-0963">Cytoplasm</keyword>
<keyword id="KW-0227">DNA damage</keyword>
<keyword id="KW-0233">DNA recombination</keyword>
<keyword id="KW-0234">DNA repair</keyword>
<keyword id="KW-0255">Endonuclease</keyword>
<keyword id="KW-0378">Hydrolase</keyword>
<keyword id="KW-0460">Magnesium</keyword>
<keyword id="KW-0479">Metal-binding</keyword>
<keyword id="KW-0540">Nuclease</keyword>
<feature type="chain" id="PRO_1000095680" description="Holliday junction resolvase RecU">
    <location>
        <begin position="1"/>
        <end position="198"/>
    </location>
</feature>
<feature type="region of interest" description="Disordered" evidence="2">
    <location>
        <begin position="1"/>
        <end position="22"/>
    </location>
</feature>
<feature type="compositionally biased region" description="Polar residues" evidence="2">
    <location>
        <begin position="11"/>
        <end position="22"/>
    </location>
</feature>
<feature type="binding site" evidence="1">
    <location>
        <position position="81"/>
    </location>
    <ligand>
        <name>Mg(2+)</name>
        <dbReference type="ChEBI" id="CHEBI:18420"/>
    </ligand>
</feature>
<feature type="binding site" evidence="1">
    <location>
        <position position="83"/>
    </location>
    <ligand>
        <name>Mg(2+)</name>
        <dbReference type="ChEBI" id="CHEBI:18420"/>
    </ligand>
</feature>
<feature type="binding site" evidence="1">
    <location>
        <position position="96"/>
    </location>
    <ligand>
        <name>Mg(2+)</name>
        <dbReference type="ChEBI" id="CHEBI:18420"/>
    </ligand>
</feature>
<feature type="binding site" evidence="1">
    <location>
        <position position="115"/>
    </location>
    <ligand>
        <name>Mg(2+)</name>
        <dbReference type="ChEBI" id="CHEBI:18420"/>
    </ligand>
</feature>
<feature type="site" description="Transition state stabilizer" evidence="1">
    <location>
        <position position="98"/>
    </location>
</feature>
<organism>
    <name type="scientific">Streptococcus pneumoniae serotype 19F (strain G54)</name>
    <dbReference type="NCBI Taxonomy" id="512566"/>
    <lineage>
        <taxon>Bacteria</taxon>
        <taxon>Bacillati</taxon>
        <taxon>Bacillota</taxon>
        <taxon>Bacilli</taxon>
        <taxon>Lactobacillales</taxon>
        <taxon>Streptococcaceae</taxon>
        <taxon>Streptococcus</taxon>
    </lineage>
</organism>
<sequence>MVNYPHKVSSQKRQTSLSQPKNFANRGMSFEKMINATNDYYLSQGLAVIHKKPTPIQIVQVDYPQRSRAKIVEAYFRQASTTDYSGVYNGYYIDFEVKETKQKRAIPMKNFHPHQIQHMEQVLAQQGICFVLLHFSSQQETYLLPAFDLIRFYHQDKGQKSMPLEYIREYGYEIKAGAFPQIPYLNVIKEHLLGGKTR</sequence>
<reference key="1">
    <citation type="journal article" date="2001" name="Microb. Drug Resist.">
        <title>Annotated draft genomic sequence from a Streptococcus pneumoniae type 19F clinical isolate.</title>
        <authorList>
            <person name="Dopazo J."/>
            <person name="Mendoza A."/>
            <person name="Herrero J."/>
            <person name="Caldara F."/>
            <person name="Humbert Y."/>
            <person name="Friedli L."/>
            <person name="Guerrier M."/>
            <person name="Grand-Schenk E."/>
            <person name="Gandin C."/>
            <person name="de Francesco M."/>
            <person name="Polissi A."/>
            <person name="Buell G."/>
            <person name="Feger G."/>
            <person name="Garcia E."/>
            <person name="Peitsch M."/>
            <person name="Garcia-Bustos J.F."/>
        </authorList>
    </citation>
    <scope>NUCLEOTIDE SEQUENCE [LARGE SCALE GENOMIC DNA]</scope>
    <source>
        <strain>G54</strain>
    </source>
</reference>
<reference key="2">
    <citation type="submission" date="2008-03" db="EMBL/GenBank/DDBJ databases">
        <title>Pneumococcal beta glucoside metabolism investigated by whole genome comparison.</title>
        <authorList>
            <person name="Mulas L."/>
            <person name="Trappetti C."/>
            <person name="Hakenbeck R."/>
            <person name="Iannelli F."/>
            <person name="Pozzi G."/>
            <person name="Davidsen T.M."/>
            <person name="Tettelin H."/>
            <person name="Oggioni M."/>
        </authorList>
    </citation>
    <scope>NUCLEOTIDE SEQUENCE [LARGE SCALE GENOMIC DNA]</scope>
    <source>
        <strain>G54</strain>
    </source>
</reference>
<comment type="function">
    <text evidence="1">Endonuclease that resolves Holliday junction intermediates in genetic recombination. Cleaves mobile four-strand junctions by introducing symmetrical nicks in paired strands. Promotes annealing of linear ssDNA with homologous dsDNA. Required for DNA repair, homologous recombination and chromosome segregation.</text>
</comment>
<comment type="catalytic activity">
    <reaction evidence="1">
        <text>Endonucleolytic cleavage at a junction such as a reciprocal single-stranded crossover between two homologous DNA duplexes (Holliday junction).</text>
        <dbReference type="EC" id="3.1.21.10"/>
    </reaction>
</comment>
<comment type="cofactor">
    <cofactor evidence="1">
        <name>Mg(2+)</name>
        <dbReference type="ChEBI" id="CHEBI:18420"/>
    </cofactor>
    <text evidence="1">Binds 1 Mg(2+) ion per subunit.</text>
</comment>
<comment type="subcellular location">
    <subcellularLocation>
        <location evidence="1">Cytoplasm</location>
    </subcellularLocation>
</comment>
<comment type="similarity">
    <text evidence="1">Belongs to the RecU family.</text>
</comment>
<dbReference type="EC" id="3.1.21.10" evidence="1"/>
<dbReference type="EMBL" id="CP001015">
    <property type="protein sequence ID" value="ACF56166.1"/>
    <property type="molecule type" value="Genomic_DNA"/>
</dbReference>
<dbReference type="SMR" id="B5E7B0"/>
<dbReference type="KEGG" id="spx:SPG_0335"/>
<dbReference type="HOGENOM" id="CLU_096340_0_0_9"/>
<dbReference type="GO" id="GO:0005737">
    <property type="term" value="C:cytoplasm"/>
    <property type="evidence" value="ECO:0007669"/>
    <property type="project" value="UniProtKB-SubCell"/>
</dbReference>
<dbReference type="GO" id="GO:0004519">
    <property type="term" value="F:endonuclease activity"/>
    <property type="evidence" value="ECO:0007669"/>
    <property type="project" value="UniProtKB-UniRule"/>
</dbReference>
<dbReference type="GO" id="GO:0000287">
    <property type="term" value="F:magnesium ion binding"/>
    <property type="evidence" value="ECO:0007669"/>
    <property type="project" value="UniProtKB-UniRule"/>
</dbReference>
<dbReference type="GO" id="GO:0003676">
    <property type="term" value="F:nucleic acid binding"/>
    <property type="evidence" value="ECO:0007669"/>
    <property type="project" value="InterPro"/>
</dbReference>
<dbReference type="GO" id="GO:0007059">
    <property type="term" value="P:chromosome segregation"/>
    <property type="evidence" value="ECO:0007669"/>
    <property type="project" value="UniProtKB-UniRule"/>
</dbReference>
<dbReference type="GO" id="GO:0006310">
    <property type="term" value="P:DNA recombination"/>
    <property type="evidence" value="ECO:0007669"/>
    <property type="project" value="UniProtKB-UniRule"/>
</dbReference>
<dbReference type="GO" id="GO:0006281">
    <property type="term" value="P:DNA repair"/>
    <property type="evidence" value="ECO:0007669"/>
    <property type="project" value="UniProtKB-UniRule"/>
</dbReference>
<dbReference type="CDD" id="cd22354">
    <property type="entry name" value="RecU-like"/>
    <property type="match status" value="1"/>
</dbReference>
<dbReference type="Gene3D" id="3.40.1350.10">
    <property type="match status" value="1"/>
</dbReference>
<dbReference type="HAMAP" id="MF_00130">
    <property type="entry name" value="RecU"/>
    <property type="match status" value="1"/>
</dbReference>
<dbReference type="InterPro" id="IPR004612">
    <property type="entry name" value="Resolv_RecU"/>
</dbReference>
<dbReference type="InterPro" id="IPR011335">
    <property type="entry name" value="Restrct_endonuc-II-like"/>
</dbReference>
<dbReference type="InterPro" id="IPR011856">
    <property type="entry name" value="tRNA_endonuc-like_dom_sf"/>
</dbReference>
<dbReference type="NCBIfam" id="NF002580">
    <property type="entry name" value="PRK02234.1-1"/>
    <property type="match status" value="1"/>
</dbReference>
<dbReference type="NCBIfam" id="NF002584">
    <property type="entry name" value="PRK02234.1-5"/>
    <property type="match status" value="1"/>
</dbReference>
<dbReference type="NCBIfam" id="TIGR00648">
    <property type="entry name" value="recU"/>
    <property type="match status" value="1"/>
</dbReference>
<dbReference type="Pfam" id="PF03838">
    <property type="entry name" value="RecU"/>
    <property type="match status" value="1"/>
</dbReference>
<dbReference type="PIRSF" id="PIRSF037785">
    <property type="entry name" value="RecU"/>
    <property type="match status" value="1"/>
</dbReference>
<dbReference type="SUPFAM" id="SSF52980">
    <property type="entry name" value="Restriction endonuclease-like"/>
    <property type="match status" value="1"/>
</dbReference>
<gene>
    <name evidence="1" type="primary">recU</name>
    <name type="ordered locus">SPG_0335</name>
</gene>
<evidence type="ECO:0000255" key="1">
    <source>
        <dbReference type="HAMAP-Rule" id="MF_00130"/>
    </source>
</evidence>
<evidence type="ECO:0000256" key="2">
    <source>
        <dbReference type="SAM" id="MobiDB-lite"/>
    </source>
</evidence>
<proteinExistence type="inferred from homology"/>
<name>RECU_STRP4</name>
<accession>B5E7B0</accession>
<protein>
    <recommendedName>
        <fullName evidence="1">Holliday junction resolvase RecU</fullName>
        <ecNumber evidence="1">3.1.21.10</ecNumber>
    </recommendedName>
    <alternativeName>
        <fullName evidence="1">Recombination protein U homolog</fullName>
    </alternativeName>
</protein>